<feature type="chain" id="PRO_0000362519" description="ATP synthase subunit a">
    <location>
        <begin position="1"/>
        <end position="274"/>
    </location>
</feature>
<feature type="transmembrane region" description="Helical" evidence="1">
    <location>
        <begin position="43"/>
        <end position="63"/>
    </location>
</feature>
<feature type="transmembrane region" description="Helical" evidence="1">
    <location>
        <begin position="103"/>
        <end position="123"/>
    </location>
</feature>
<feature type="transmembrane region" description="Helical" evidence="1">
    <location>
        <begin position="149"/>
        <end position="169"/>
    </location>
</feature>
<feature type="transmembrane region" description="Helical" evidence="1">
    <location>
        <begin position="223"/>
        <end position="243"/>
    </location>
</feature>
<feature type="transmembrane region" description="Helical" evidence="1">
    <location>
        <begin position="245"/>
        <end position="265"/>
    </location>
</feature>
<name>ATP6_YERPB</name>
<evidence type="ECO:0000255" key="1">
    <source>
        <dbReference type="HAMAP-Rule" id="MF_01393"/>
    </source>
</evidence>
<gene>
    <name evidence="1" type="primary">atpB</name>
    <name type="ordered locus">YPTS_4174</name>
</gene>
<dbReference type="EMBL" id="CP001048">
    <property type="protein sequence ID" value="ACC91117.1"/>
    <property type="molecule type" value="Genomic_DNA"/>
</dbReference>
<dbReference type="RefSeq" id="WP_002228150.1">
    <property type="nucleotide sequence ID" value="NZ_CP009780.1"/>
</dbReference>
<dbReference type="SMR" id="B2K841"/>
<dbReference type="GeneID" id="96663465"/>
<dbReference type="KEGG" id="ypb:YPTS_4174"/>
<dbReference type="PATRIC" id="fig|502801.10.peg.3645"/>
<dbReference type="GO" id="GO:0005886">
    <property type="term" value="C:plasma membrane"/>
    <property type="evidence" value="ECO:0007669"/>
    <property type="project" value="UniProtKB-SubCell"/>
</dbReference>
<dbReference type="GO" id="GO:0045259">
    <property type="term" value="C:proton-transporting ATP synthase complex"/>
    <property type="evidence" value="ECO:0007669"/>
    <property type="project" value="UniProtKB-KW"/>
</dbReference>
<dbReference type="GO" id="GO:0046933">
    <property type="term" value="F:proton-transporting ATP synthase activity, rotational mechanism"/>
    <property type="evidence" value="ECO:0007669"/>
    <property type="project" value="UniProtKB-UniRule"/>
</dbReference>
<dbReference type="GO" id="GO:0042777">
    <property type="term" value="P:proton motive force-driven plasma membrane ATP synthesis"/>
    <property type="evidence" value="ECO:0007669"/>
    <property type="project" value="TreeGrafter"/>
</dbReference>
<dbReference type="CDD" id="cd00310">
    <property type="entry name" value="ATP-synt_Fo_a_6"/>
    <property type="match status" value="1"/>
</dbReference>
<dbReference type="FunFam" id="1.20.120.220:FF:000002">
    <property type="entry name" value="ATP synthase subunit a"/>
    <property type="match status" value="1"/>
</dbReference>
<dbReference type="Gene3D" id="1.20.120.220">
    <property type="entry name" value="ATP synthase, F0 complex, subunit A"/>
    <property type="match status" value="1"/>
</dbReference>
<dbReference type="HAMAP" id="MF_01393">
    <property type="entry name" value="ATP_synth_a_bact"/>
    <property type="match status" value="1"/>
</dbReference>
<dbReference type="InterPro" id="IPR045082">
    <property type="entry name" value="ATP_syn_F0_a_bact/chloroplast"/>
</dbReference>
<dbReference type="InterPro" id="IPR000568">
    <property type="entry name" value="ATP_synth_F0_asu"/>
</dbReference>
<dbReference type="InterPro" id="IPR023011">
    <property type="entry name" value="ATP_synth_F0_asu_AS"/>
</dbReference>
<dbReference type="InterPro" id="IPR035908">
    <property type="entry name" value="F0_ATP_A_sf"/>
</dbReference>
<dbReference type="NCBIfam" id="TIGR01131">
    <property type="entry name" value="ATP_synt_6_or_A"/>
    <property type="match status" value="1"/>
</dbReference>
<dbReference type="NCBIfam" id="NF004477">
    <property type="entry name" value="PRK05815.1-1"/>
    <property type="match status" value="1"/>
</dbReference>
<dbReference type="PANTHER" id="PTHR42823">
    <property type="entry name" value="ATP SYNTHASE SUBUNIT A, CHLOROPLASTIC"/>
    <property type="match status" value="1"/>
</dbReference>
<dbReference type="PANTHER" id="PTHR42823:SF3">
    <property type="entry name" value="ATP SYNTHASE SUBUNIT A, CHLOROPLASTIC"/>
    <property type="match status" value="1"/>
</dbReference>
<dbReference type="Pfam" id="PF00119">
    <property type="entry name" value="ATP-synt_A"/>
    <property type="match status" value="1"/>
</dbReference>
<dbReference type="PRINTS" id="PR00123">
    <property type="entry name" value="ATPASEA"/>
</dbReference>
<dbReference type="SUPFAM" id="SSF81336">
    <property type="entry name" value="F1F0 ATP synthase subunit A"/>
    <property type="match status" value="1"/>
</dbReference>
<dbReference type="PROSITE" id="PS00449">
    <property type="entry name" value="ATPASE_A"/>
    <property type="match status" value="1"/>
</dbReference>
<comment type="function">
    <text evidence="1">Key component of the proton channel; it plays a direct role in the translocation of protons across the membrane.</text>
</comment>
<comment type="subunit">
    <text evidence="1">F-type ATPases have 2 components, CF(1) - the catalytic core - and CF(0) - the membrane proton channel. CF(1) has five subunits: alpha(3), beta(3), gamma(1), delta(1), epsilon(1). CF(0) has three main subunits: a(1), b(2) and c(9-12). The alpha and beta chains form an alternating ring which encloses part of the gamma chain. CF(1) is attached to CF(0) by a central stalk formed by the gamma and epsilon chains, while a peripheral stalk is formed by the delta and b chains.</text>
</comment>
<comment type="subcellular location">
    <subcellularLocation>
        <location evidence="1">Cell inner membrane</location>
        <topology evidence="1">Multi-pass membrane protein</topology>
    </subcellularLocation>
</comment>
<comment type="similarity">
    <text evidence="1">Belongs to the ATPase A chain family.</text>
</comment>
<sequence length="274" mass="30411">MSASGEISTPRDYIGHHLNHLQLDLRTFELVNPHSTGPATFWTLNIDSLFFSVVLGLAFLLVFRKVAASATSGVPGKLQTAVELIIGFVDNSVRDMYHGKSKVIAPLALTVFVWVLLMNMMDLLPIDLLPYIGEHVFGLPALRVVPTADVSITLSMALGVFILIIFYSIKMKGVGGFTKELTMQPFNHPIFIPVNLILEGVSLLSKPLSLGLRLFGNMYAGELIFILIAGLLPWWSQWMLSVPWAIFHILIITLQAFIFMVLTIVYLSMASEEH</sequence>
<keyword id="KW-0066">ATP synthesis</keyword>
<keyword id="KW-0997">Cell inner membrane</keyword>
<keyword id="KW-1003">Cell membrane</keyword>
<keyword id="KW-0138">CF(0)</keyword>
<keyword id="KW-0375">Hydrogen ion transport</keyword>
<keyword id="KW-0406">Ion transport</keyword>
<keyword id="KW-0472">Membrane</keyword>
<keyword id="KW-0812">Transmembrane</keyword>
<keyword id="KW-1133">Transmembrane helix</keyword>
<keyword id="KW-0813">Transport</keyword>
<protein>
    <recommendedName>
        <fullName evidence="1">ATP synthase subunit a</fullName>
    </recommendedName>
    <alternativeName>
        <fullName evidence="1">ATP synthase F0 sector subunit a</fullName>
    </alternativeName>
    <alternativeName>
        <fullName evidence="1">F-ATPase subunit 6</fullName>
    </alternativeName>
</protein>
<organism>
    <name type="scientific">Yersinia pseudotuberculosis serotype IB (strain PB1/+)</name>
    <dbReference type="NCBI Taxonomy" id="502801"/>
    <lineage>
        <taxon>Bacteria</taxon>
        <taxon>Pseudomonadati</taxon>
        <taxon>Pseudomonadota</taxon>
        <taxon>Gammaproteobacteria</taxon>
        <taxon>Enterobacterales</taxon>
        <taxon>Yersiniaceae</taxon>
        <taxon>Yersinia</taxon>
    </lineage>
</organism>
<reference key="1">
    <citation type="submission" date="2008-04" db="EMBL/GenBank/DDBJ databases">
        <title>Complete sequence of Yersinia pseudotuberculosis PB1/+.</title>
        <authorList>
            <person name="Copeland A."/>
            <person name="Lucas S."/>
            <person name="Lapidus A."/>
            <person name="Glavina del Rio T."/>
            <person name="Dalin E."/>
            <person name="Tice H."/>
            <person name="Bruce D."/>
            <person name="Goodwin L."/>
            <person name="Pitluck S."/>
            <person name="Munk A.C."/>
            <person name="Brettin T."/>
            <person name="Detter J.C."/>
            <person name="Han C."/>
            <person name="Tapia R."/>
            <person name="Schmutz J."/>
            <person name="Larimer F."/>
            <person name="Land M."/>
            <person name="Hauser L."/>
            <person name="Challacombe J.F."/>
            <person name="Green L."/>
            <person name="Lindler L.E."/>
            <person name="Nikolich M.P."/>
            <person name="Richardson P."/>
        </authorList>
    </citation>
    <scope>NUCLEOTIDE SEQUENCE [LARGE SCALE GENOMIC DNA]</scope>
    <source>
        <strain>PB1/+</strain>
    </source>
</reference>
<accession>B2K841</accession>
<proteinExistence type="inferred from homology"/>